<name>SYA_PROM1</name>
<keyword id="KW-0030">Aminoacyl-tRNA synthetase</keyword>
<keyword id="KW-0067">ATP-binding</keyword>
<keyword id="KW-0963">Cytoplasm</keyword>
<keyword id="KW-0436">Ligase</keyword>
<keyword id="KW-0479">Metal-binding</keyword>
<keyword id="KW-0547">Nucleotide-binding</keyword>
<keyword id="KW-0648">Protein biosynthesis</keyword>
<keyword id="KW-0694">RNA-binding</keyword>
<keyword id="KW-0820">tRNA-binding</keyword>
<keyword id="KW-0862">Zinc</keyword>
<evidence type="ECO:0000255" key="1">
    <source>
        <dbReference type="HAMAP-Rule" id="MF_00036"/>
    </source>
</evidence>
<comment type="function">
    <text evidence="1">Catalyzes the attachment of alanine to tRNA(Ala) in a two-step reaction: alanine is first activated by ATP to form Ala-AMP and then transferred to the acceptor end of tRNA(Ala). Also edits incorrectly charged Ser-tRNA(Ala) and Gly-tRNA(Ala) via its editing domain.</text>
</comment>
<comment type="catalytic activity">
    <reaction evidence="1">
        <text>tRNA(Ala) + L-alanine + ATP = L-alanyl-tRNA(Ala) + AMP + diphosphate</text>
        <dbReference type="Rhea" id="RHEA:12540"/>
        <dbReference type="Rhea" id="RHEA-COMP:9657"/>
        <dbReference type="Rhea" id="RHEA-COMP:9923"/>
        <dbReference type="ChEBI" id="CHEBI:30616"/>
        <dbReference type="ChEBI" id="CHEBI:33019"/>
        <dbReference type="ChEBI" id="CHEBI:57972"/>
        <dbReference type="ChEBI" id="CHEBI:78442"/>
        <dbReference type="ChEBI" id="CHEBI:78497"/>
        <dbReference type="ChEBI" id="CHEBI:456215"/>
        <dbReference type="EC" id="6.1.1.7"/>
    </reaction>
</comment>
<comment type="cofactor">
    <cofactor evidence="1">
        <name>Zn(2+)</name>
        <dbReference type="ChEBI" id="CHEBI:29105"/>
    </cofactor>
    <text evidence="1">Binds 1 zinc ion per subunit.</text>
</comment>
<comment type="subcellular location">
    <subcellularLocation>
        <location evidence="1">Cytoplasm</location>
    </subcellularLocation>
</comment>
<comment type="domain">
    <text evidence="1">Consists of three domains; the N-terminal catalytic domain, the editing domain and the C-terminal C-Ala domain. The editing domain removes incorrectly charged amino acids, while the C-Ala domain, along with tRNA(Ala), serves as a bridge to cooperatively bring together the editing and aminoacylation centers thus stimulating deacylation of misacylated tRNAs.</text>
</comment>
<comment type="similarity">
    <text evidence="1">Belongs to the class-II aminoacyl-tRNA synthetase family.</text>
</comment>
<protein>
    <recommendedName>
        <fullName evidence="1">Alanine--tRNA ligase</fullName>
        <ecNumber evidence="1">6.1.1.7</ecNumber>
    </recommendedName>
    <alternativeName>
        <fullName evidence="1">Alanyl-tRNA synthetase</fullName>
        <shortName evidence="1">AlaRS</shortName>
    </alternativeName>
</protein>
<organism>
    <name type="scientific">Prochlorococcus marinus (strain NATL1A)</name>
    <dbReference type="NCBI Taxonomy" id="167555"/>
    <lineage>
        <taxon>Bacteria</taxon>
        <taxon>Bacillati</taxon>
        <taxon>Cyanobacteriota</taxon>
        <taxon>Cyanophyceae</taxon>
        <taxon>Synechococcales</taxon>
        <taxon>Prochlorococcaceae</taxon>
        <taxon>Prochlorococcus</taxon>
    </lineage>
</organism>
<proteinExistence type="inferred from homology"/>
<feature type="chain" id="PRO_0000347730" description="Alanine--tRNA ligase">
    <location>
        <begin position="1"/>
        <end position="886"/>
    </location>
</feature>
<feature type="binding site" evidence="1">
    <location>
        <position position="568"/>
    </location>
    <ligand>
        <name>Zn(2+)</name>
        <dbReference type="ChEBI" id="CHEBI:29105"/>
    </ligand>
</feature>
<feature type="binding site" evidence="1">
    <location>
        <position position="572"/>
    </location>
    <ligand>
        <name>Zn(2+)</name>
        <dbReference type="ChEBI" id="CHEBI:29105"/>
    </ligand>
</feature>
<feature type="binding site" evidence="1">
    <location>
        <position position="670"/>
    </location>
    <ligand>
        <name>Zn(2+)</name>
        <dbReference type="ChEBI" id="CHEBI:29105"/>
    </ligand>
</feature>
<feature type="binding site" evidence="1">
    <location>
        <position position="674"/>
    </location>
    <ligand>
        <name>Zn(2+)</name>
        <dbReference type="ChEBI" id="CHEBI:29105"/>
    </ligand>
</feature>
<dbReference type="EC" id="6.1.1.7" evidence="1"/>
<dbReference type="EMBL" id="CP000553">
    <property type="protein sequence ID" value="ABM74622.1"/>
    <property type="molecule type" value="Genomic_DNA"/>
</dbReference>
<dbReference type="RefSeq" id="WP_011822860.1">
    <property type="nucleotide sequence ID" value="NC_008819.1"/>
</dbReference>
<dbReference type="SMR" id="A2BZG2"/>
<dbReference type="KEGG" id="pme:NATL1_00581"/>
<dbReference type="eggNOG" id="COG0013">
    <property type="taxonomic scope" value="Bacteria"/>
</dbReference>
<dbReference type="HOGENOM" id="CLU_004485_1_0_3"/>
<dbReference type="Proteomes" id="UP000002592">
    <property type="component" value="Chromosome"/>
</dbReference>
<dbReference type="GO" id="GO:0005829">
    <property type="term" value="C:cytosol"/>
    <property type="evidence" value="ECO:0007669"/>
    <property type="project" value="TreeGrafter"/>
</dbReference>
<dbReference type="GO" id="GO:0004813">
    <property type="term" value="F:alanine-tRNA ligase activity"/>
    <property type="evidence" value="ECO:0007669"/>
    <property type="project" value="UniProtKB-UniRule"/>
</dbReference>
<dbReference type="GO" id="GO:0002161">
    <property type="term" value="F:aminoacyl-tRNA deacylase activity"/>
    <property type="evidence" value="ECO:0007669"/>
    <property type="project" value="TreeGrafter"/>
</dbReference>
<dbReference type="GO" id="GO:0005524">
    <property type="term" value="F:ATP binding"/>
    <property type="evidence" value="ECO:0007669"/>
    <property type="project" value="UniProtKB-UniRule"/>
</dbReference>
<dbReference type="GO" id="GO:0000049">
    <property type="term" value="F:tRNA binding"/>
    <property type="evidence" value="ECO:0007669"/>
    <property type="project" value="UniProtKB-KW"/>
</dbReference>
<dbReference type="GO" id="GO:0008270">
    <property type="term" value="F:zinc ion binding"/>
    <property type="evidence" value="ECO:0007669"/>
    <property type="project" value="UniProtKB-UniRule"/>
</dbReference>
<dbReference type="GO" id="GO:0006419">
    <property type="term" value="P:alanyl-tRNA aminoacylation"/>
    <property type="evidence" value="ECO:0007669"/>
    <property type="project" value="UniProtKB-UniRule"/>
</dbReference>
<dbReference type="CDD" id="cd00673">
    <property type="entry name" value="AlaRS_core"/>
    <property type="match status" value="1"/>
</dbReference>
<dbReference type="FunFam" id="2.40.30.130:FF:000001">
    <property type="entry name" value="Alanine--tRNA ligase"/>
    <property type="match status" value="1"/>
</dbReference>
<dbReference type="FunFam" id="3.10.310.40:FF:000001">
    <property type="entry name" value="Alanine--tRNA ligase"/>
    <property type="match status" value="1"/>
</dbReference>
<dbReference type="FunFam" id="3.30.54.20:FF:000001">
    <property type="entry name" value="Alanine--tRNA ligase"/>
    <property type="match status" value="1"/>
</dbReference>
<dbReference type="FunFam" id="3.30.930.10:FF:000004">
    <property type="entry name" value="Alanine--tRNA ligase"/>
    <property type="match status" value="1"/>
</dbReference>
<dbReference type="FunFam" id="3.30.980.10:FF:000004">
    <property type="entry name" value="Alanine--tRNA ligase, cytoplasmic"/>
    <property type="match status" value="1"/>
</dbReference>
<dbReference type="Gene3D" id="2.40.30.130">
    <property type="match status" value="1"/>
</dbReference>
<dbReference type="Gene3D" id="3.10.310.40">
    <property type="match status" value="1"/>
</dbReference>
<dbReference type="Gene3D" id="3.30.54.20">
    <property type="match status" value="1"/>
</dbReference>
<dbReference type="Gene3D" id="6.10.250.550">
    <property type="match status" value="1"/>
</dbReference>
<dbReference type="Gene3D" id="3.30.930.10">
    <property type="entry name" value="Bira Bifunctional Protein, Domain 2"/>
    <property type="match status" value="1"/>
</dbReference>
<dbReference type="Gene3D" id="3.30.980.10">
    <property type="entry name" value="Threonyl-trna Synthetase, Chain A, domain 2"/>
    <property type="match status" value="1"/>
</dbReference>
<dbReference type="HAMAP" id="MF_00036_B">
    <property type="entry name" value="Ala_tRNA_synth_B"/>
    <property type="match status" value="1"/>
</dbReference>
<dbReference type="InterPro" id="IPR045864">
    <property type="entry name" value="aa-tRNA-synth_II/BPL/LPL"/>
</dbReference>
<dbReference type="InterPro" id="IPR002318">
    <property type="entry name" value="Ala-tRNA-lgiase_IIc"/>
</dbReference>
<dbReference type="InterPro" id="IPR018162">
    <property type="entry name" value="Ala-tRNA-ligase_IIc_anticod-bd"/>
</dbReference>
<dbReference type="InterPro" id="IPR018165">
    <property type="entry name" value="Ala-tRNA-synth_IIc_core"/>
</dbReference>
<dbReference type="InterPro" id="IPR018164">
    <property type="entry name" value="Ala-tRNA-synth_IIc_N"/>
</dbReference>
<dbReference type="InterPro" id="IPR050058">
    <property type="entry name" value="Ala-tRNA_ligase"/>
</dbReference>
<dbReference type="InterPro" id="IPR023033">
    <property type="entry name" value="Ala_tRNA_ligase_euk/bac"/>
</dbReference>
<dbReference type="InterPro" id="IPR003156">
    <property type="entry name" value="DHHA1_dom"/>
</dbReference>
<dbReference type="InterPro" id="IPR018163">
    <property type="entry name" value="Thr/Ala-tRNA-synth_IIc_edit"/>
</dbReference>
<dbReference type="InterPro" id="IPR009000">
    <property type="entry name" value="Transl_B-barrel_sf"/>
</dbReference>
<dbReference type="InterPro" id="IPR012947">
    <property type="entry name" value="tRNA_SAD"/>
</dbReference>
<dbReference type="NCBIfam" id="TIGR00344">
    <property type="entry name" value="alaS"/>
    <property type="match status" value="1"/>
</dbReference>
<dbReference type="PANTHER" id="PTHR11777:SF9">
    <property type="entry name" value="ALANINE--TRNA LIGASE, CYTOPLASMIC"/>
    <property type="match status" value="1"/>
</dbReference>
<dbReference type="PANTHER" id="PTHR11777">
    <property type="entry name" value="ALANYL-TRNA SYNTHETASE"/>
    <property type="match status" value="1"/>
</dbReference>
<dbReference type="Pfam" id="PF02272">
    <property type="entry name" value="DHHA1"/>
    <property type="match status" value="1"/>
</dbReference>
<dbReference type="Pfam" id="PF01411">
    <property type="entry name" value="tRNA-synt_2c"/>
    <property type="match status" value="1"/>
</dbReference>
<dbReference type="Pfam" id="PF07973">
    <property type="entry name" value="tRNA_SAD"/>
    <property type="match status" value="1"/>
</dbReference>
<dbReference type="PRINTS" id="PR00980">
    <property type="entry name" value="TRNASYNTHALA"/>
</dbReference>
<dbReference type="SMART" id="SM00863">
    <property type="entry name" value="tRNA_SAD"/>
    <property type="match status" value="1"/>
</dbReference>
<dbReference type="SUPFAM" id="SSF55681">
    <property type="entry name" value="Class II aaRS and biotin synthetases"/>
    <property type="match status" value="1"/>
</dbReference>
<dbReference type="SUPFAM" id="SSF101353">
    <property type="entry name" value="Putative anticodon-binding domain of alanyl-tRNA synthetase (AlaRS)"/>
    <property type="match status" value="1"/>
</dbReference>
<dbReference type="SUPFAM" id="SSF55186">
    <property type="entry name" value="ThrRS/AlaRS common domain"/>
    <property type="match status" value="1"/>
</dbReference>
<dbReference type="SUPFAM" id="SSF50447">
    <property type="entry name" value="Translation proteins"/>
    <property type="match status" value="1"/>
</dbReference>
<dbReference type="PROSITE" id="PS50860">
    <property type="entry name" value="AA_TRNA_LIGASE_II_ALA"/>
    <property type="match status" value="1"/>
</dbReference>
<gene>
    <name evidence="1" type="primary">alaS</name>
    <name type="ordered locus">NATL1_00581</name>
</gene>
<accession>A2BZG2</accession>
<reference key="1">
    <citation type="journal article" date="2007" name="PLoS Genet.">
        <title>Patterns and implications of gene gain and loss in the evolution of Prochlorococcus.</title>
        <authorList>
            <person name="Kettler G.C."/>
            <person name="Martiny A.C."/>
            <person name="Huang K."/>
            <person name="Zucker J."/>
            <person name="Coleman M.L."/>
            <person name="Rodrigue S."/>
            <person name="Chen F."/>
            <person name="Lapidus A."/>
            <person name="Ferriera S."/>
            <person name="Johnson J."/>
            <person name="Steglich C."/>
            <person name="Church G.M."/>
            <person name="Richardson P."/>
            <person name="Chisholm S.W."/>
        </authorList>
    </citation>
    <scope>NUCLEOTIDE SEQUENCE [LARGE SCALE GENOMIC DNA]</scope>
    <source>
        <strain>NATL1A</strain>
    </source>
</reference>
<sequence>MEKSSSSSINPPSLSGDEIREAFINFFVQHNHQKLASSSLIPDDPTVLLTIAGMLPFKPIFLGLKESSTPRATSSQKCIRTNDIENVGRTARHHTFFEMLGNFSFGDYFKKEAIQWAWELSTEVFRLNPQNIVISVFKEDLEAEQIWKEVVGVDANRIIRMGAADNFWSSGATGPCGPCSELYFDFKPELGSDEIDLEDDSRFIEFYNLVFMQYNRDLEGNLEPLANCHIDTGMGLERMAQILQKKSNNYETDLIFPLIKAAALLAQLEYETTNKKNKTSLKIIGDHCRAVTHLICDGVSASNLGRGYILRRLIRRMIRHGRLVGIVQPFLPQLAEMAIELMKNAYPQLLEKKKIILNELKIEESRFLETLERGEKLLAEITSHECDLISGAQAFELYDTYGFPLELTEEIANEKGISVDINGFENEMAKQRKRAKEASVSIDLTEEGSIEREISLFDETRFEGYEKLETTSTVIGIFKNNESVKQAVQGDLVKIIVNRTPFYAESGGQIGDKGIITSQDLEVSVENVRKKKNIFIHSGIVNTGVLEINSSVQMNVTPSFRQRTTSNHTATHLLQSALKLSIDSSVSQRGSLVSNHRLRFDFNAPKPLTIKELEDMEVRINQWINEDHPIQIKTMPIKEAMAAGALAMFGEKYGDVVRVVDVPGVSMELCGGTHVTRTSQLGTFKIINETGIASGIRRIEAIAGPSVLDYFNERDLVVKELSKSFKVQSYEIVERVSSLQLELKDKTKELIKVKNDLALAKALGLASYAKSVGKSKLLIRRLDGVDGSGLQSAASSLIDHLGKYSAVIFGGIPNQEIDNKLVFVAAFSPDLVSDGLHAGKFISGVAKMCGGGGGGRPNLAQAGGSQPQSLDLALEKANENLTQQLS</sequence>